<comment type="catalytic activity">
    <reaction evidence="1">
        <text>(6S)-5,6,7,8-tetrahydrofolate + formate + ATP = (6R)-10-formyltetrahydrofolate + ADP + phosphate</text>
        <dbReference type="Rhea" id="RHEA:20221"/>
        <dbReference type="ChEBI" id="CHEBI:15740"/>
        <dbReference type="ChEBI" id="CHEBI:30616"/>
        <dbReference type="ChEBI" id="CHEBI:43474"/>
        <dbReference type="ChEBI" id="CHEBI:57453"/>
        <dbReference type="ChEBI" id="CHEBI:195366"/>
        <dbReference type="ChEBI" id="CHEBI:456216"/>
        <dbReference type="EC" id="6.3.4.3"/>
    </reaction>
</comment>
<comment type="pathway">
    <text evidence="1">One-carbon metabolism; tetrahydrofolate interconversion.</text>
</comment>
<comment type="similarity">
    <text evidence="1">Belongs to the formate--tetrahydrofolate ligase family.</text>
</comment>
<proteinExistence type="inferred from homology"/>
<feature type="chain" id="PRO_0000293031" description="Formate--tetrahydrofolate ligase">
    <location>
        <begin position="1"/>
        <end position="562"/>
    </location>
</feature>
<feature type="binding site" evidence="1">
    <location>
        <begin position="70"/>
        <end position="77"/>
    </location>
    <ligand>
        <name>ATP</name>
        <dbReference type="ChEBI" id="CHEBI:30616"/>
    </ligand>
</feature>
<sequence length="562" mass="59201">MSENKVLSDLEIAHNATMLPVEAIAERAGINVDALELYGPYKAKINTAKLVLPRGKAPGKVVLVSAMSPTPAGEGKSTTTVGLADSLARAGHKVMIALREPSLGPILGMKGGATGGGYSQVLPMDDINLHFTGDFHAITSANNALMALVDNHIFQGNQLGIDPRRMTFKRVLDMNDRALREVVIGLGGPMQGVPRQDGFDITVASEIMAVFCLATDLDDLRERLGRITFGYTYDRTPVTVSDLGVEGALTMLLKDAIKPNLVQTIAGTPALVHGGPFANIAHGCNSLIATSTAMQLADIVVTEAGFGADLGAEKYMDIKARIAEVAPSAVVVVATIRALKMQGGVPKEKLNEPNVEAVAAGVENLKRHVGNVAKFGISPVVSINKFGSDTPEELEWLLAWCAAEGVEAAVADVWGRGGGGDGGDELAAKVAAALEAPSNFHHLYPLELGVEDKIRTIVQEIYGADGVEFSVPALKRLAEIEKNGWSGLPVCMAKTQYSFTDDASRLGAPKGFRVHVRELIPKTGAGFIVALTGAVMTMPGLPKEPAAMRMDVDADGNPTGLF</sequence>
<evidence type="ECO:0000255" key="1">
    <source>
        <dbReference type="HAMAP-Rule" id="MF_01543"/>
    </source>
</evidence>
<dbReference type="EC" id="6.3.4.3" evidence="1"/>
<dbReference type="EMBL" id="CP000474">
    <property type="protein sequence ID" value="ABM10024.1"/>
    <property type="molecule type" value="Genomic_DNA"/>
</dbReference>
<dbReference type="RefSeq" id="WP_011775541.1">
    <property type="nucleotide sequence ID" value="NC_008711.1"/>
</dbReference>
<dbReference type="SMR" id="A1R8N9"/>
<dbReference type="STRING" id="290340.AAur_2892"/>
<dbReference type="KEGG" id="aau:AAur_2892"/>
<dbReference type="eggNOG" id="COG2759">
    <property type="taxonomic scope" value="Bacteria"/>
</dbReference>
<dbReference type="HOGENOM" id="CLU_003601_3_3_11"/>
<dbReference type="OrthoDB" id="9761733at2"/>
<dbReference type="UniPathway" id="UPA00193"/>
<dbReference type="Proteomes" id="UP000000637">
    <property type="component" value="Chromosome"/>
</dbReference>
<dbReference type="GO" id="GO:0005524">
    <property type="term" value="F:ATP binding"/>
    <property type="evidence" value="ECO:0007669"/>
    <property type="project" value="UniProtKB-UniRule"/>
</dbReference>
<dbReference type="GO" id="GO:0004329">
    <property type="term" value="F:formate-tetrahydrofolate ligase activity"/>
    <property type="evidence" value="ECO:0007669"/>
    <property type="project" value="UniProtKB-UniRule"/>
</dbReference>
<dbReference type="GO" id="GO:0035999">
    <property type="term" value="P:tetrahydrofolate interconversion"/>
    <property type="evidence" value="ECO:0007669"/>
    <property type="project" value="UniProtKB-UniRule"/>
</dbReference>
<dbReference type="CDD" id="cd00477">
    <property type="entry name" value="FTHFS"/>
    <property type="match status" value="1"/>
</dbReference>
<dbReference type="FunFam" id="3.30.1510.10:FF:000001">
    <property type="entry name" value="Formate--tetrahydrofolate ligase"/>
    <property type="match status" value="1"/>
</dbReference>
<dbReference type="FunFam" id="3.10.410.10:FF:000001">
    <property type="entry name" value="Putative formate--tetrahydrofolate ligase"/>
    <property type="match status" value="1"/>
</dbReference>
<dbReference type="Gene3D" id="3.30.1510.10">
    <property type="entry name" value="Domain 2, N(10)-formyltetrahydrofolate synthetase"/>
    <property type="match status" value="1"/>
</dbReference>
<dbReference type="Gene3D" id="3.10.410.10">
    <property type="entry name" value="Formyltetrahydrofolate synthetase, domain 3"/>
    <property type="match status" value="1"/>
</dbReference>
<dbReference type="Gene3D" id="3.40.50.300">
    <property type="entry name" value="P-loop containing nucleotide triphosphate hydrolases"/>
    <property type="match status" value="1"/>
</dbReference>
<dbReference type="HAMAP" id="MF_01543">
    <property type="entry name" value="FTHFS"/>
    <property type="match status" value="1"/>
</dbReference>
<dbReference type="InterPro" id="IPR000559">
    <property type="entry name" value="Formate_THF_ligase"/>
</dbReference>
<dbReference type="InterPro" id="IPR020628">
    <property type="entry name" value="Formate_THF_ligase_CS"/>
</dbReference>
<dbReference type="InterPro" id="IPR027417">
    <property type="entry name" value="P-loop_NTPase"/>
</dbReference>
<dbReference type="NCBIfam" id="NF010030">
    <property type="entry name" value="PRK13505.1"/>
    <property type="match status" value="1"/>
</dbReference>
<dbReference type="Pfam" id="PF01268">
    <property type="entry name" value="FTHFS"/>
    <property type="match status" value="1"/>
</dbReference>
<dbReference type="SUPFAM" id="SSF52540">
    <property type="entry name" value="P-loop containing nucleoside triphosphate hydrolases"/>
    <property type="match status" value="1"/>
</dbReference>
<dbReference type="PROSITE" id="PS00721">
    <property type="entry name" value="FTHFS_1"/>
    <property type="match status" value="1"/>
</dbReference>
<accession>A1R8N9</accession>
<name>FTHS_PAEAT</name>
<reference key="1">
    <citation type="journal article" date="2006" name="PLoS Genet.">
        <title>Secrets of soil survival revealed by the genome sequence of Arthrobacter aurescens TC1.</title>
        <authorList>
            <person name="Mongodin E.F."/>
            <person name="Shapir N."/>
            <person name="Daugherty S.C."/>
            <person name="DeBoy R.T."/>
            <person name="Emerson J.B."/>
            <person name="Shvartzbeyn A."/>
            <person name="Radune D."/>
            <person name="Vamathevan J."/>
            <person name="Riggs F."/>
            <person name="Grinberg V."/>
            <person name="Khouri H.M."/>
            <person name="Wackett L.P."/>
            <person name="Nelson K.E."/>
            <person name="Sadowsky M.J."/>
        </authorList>
    </citation>
    <scope>NUCLEOTIDE SEQUENCE [LARGE SCALE GENOMIC DNA]</scope>
    <source>
        <strain>TC1</strain>
    </source>
</reference>
<protein>
    <recommendedName>
        <fullName evidence="1">Formate--tetrahydrofolate ligase</fullName>
        <ecNumber evidence="1">6.3.4.3</ecNumber>
    </recommendedName>
    <alternativeName>
        <fullName evidence="1">Formyltetrahydrofolate synthetase</fullName>
        <shortName evidence="1">FHS</shortName>
        <shortName evidence="1">FTHFS</shortName>
    </alternativeName>
</protein>
<keyword id="KW-0067">ATP-binding</keyword>
<keyword id="KW-0436">Ligase</keyword>
<keyword id="KW-0547">Nucleotide-binding</keyword>
<keyword id="KW-0554">One-carbon metabolism</keyword>
<gene>
    <name evidence="1" type="primary">fhs</name>
    <name type="ordered locus">AAur_2892</name>
</gene>
<organism>
    <name type="scientific">Paenarthrobacter aurescens (strain TC1)</name>
    <dbReference type="NCBI Taxonomy" id="290340"/>
    <lineage>
        <taxon>Bacteria</taxon>
        <taxon>Bacillati</taxon>
        <taxon>Actinomycetota</taxon>
        <taxon>Actinomycetes</taxon>
        <taxon>Micrococcales</taxon>
        <taxon>Micrococcaceae</taxon>
        <taxon>Paenarthrobacter</taxon>
    </lineage>
</organism>